<dbReference type="EMBL" id="D10883">
    <property type="protein sequence ID" value="BAA01705.1"/>
    <property type="molecule type" value="mRNA"/>
</dbReference>
<dbReference type="PIR" id="JH0694">
    <property type="entry name" value="LURB11"/>
</dbReference>
<dbReference type="RefSeq" id="NP_001076208.1">
    <property type="nucleotide sequence ID" value="NM_001082739.1"/>
</dbReference>
<dbReference type="SMR" id="P33477"/>
<dbReference type="FunCoup" id="P33477">
    <property type="interactions" value="981"/>
</dbReference>
<dbReference type="STRING" id="9986.ENSOCUP00000003940"/>
<dbReference type="PaxDb" id="9986-ENSOCUP00000003940"/>
<dbReference type="GeneID" id="100009511"/>
<dbReference type="KEGG" id="ocu:100009511"/>
<dbReference type="CTD" id="311"/>
<dbReference type="eggNOG" id="KOG0819">
    <property type="taxonomic scope" value="Eukaryota"/>
</dbReference>
<dbReference type="InParanoid" id="P33477"/>
<dbReference type="OrthoDB" id="37886at2759"/>
<dbReference type="Proteomes" id="UP000001811">
    <property type="component" value="Unplaced"/>
</dbReference>
<dbReference type="GO" id="GO:0042470">
    <property type="term" value="C:melanosome"/>
    <property type="evidence" value="ECO:0007669"/>
    <property type="project" value="UniProtKB-SubCell"/>
</dbReference>
<dbReference type="GO" id="GO:0030496">
    <property type="term" value="C:midbody"/>
    <property type="evidence" value="ECO:0000250"/>
    <property type="project" value="UniProtKB"/>
</dbReference>
<dbReference type="GO" id="GO:0005635">
    <property type="term" value="C:nuclear envelope"/>
    <property type="evidence" value="ECO:0007669"/>
    <property type="project" value="UniProtKB-SubCell"/>
</dbReference>
<dbReference type="GO" id="GO:0005654">
    <property type="term" value="C:nucleoplasm"/>
    <property type="evidence" value="ECO:0007669"/>
    <property type="project" value="UniProtKB-SubCell"/>
</dbReference>
<dbReference type="GO" id="GO:0005886">
    <property type="term" value="C:plasma membrane"/>
    <property type="evidence" value="ECO:0007669"/>
    <property type="project" value="TreeGrafter"/>
</dbReference>
<dbReference type="GO" id="GO:0005819">
    <property type="term" value="C:spindle"/>
    <property type="evidence" value="ECO:0000250"/>
    <property type="project" value="UniProtKB"/>
</dbReference>
<dbReference type="GO" id="GO:0012506">
    <property type="term" value="C:vesicle membrane"/>
    <property type="evidence" value="ECO:0007669"/>
    <property type="project" value="TreeGrafter"/>
</dbReference>
<dbReference type="GO" id="GO:0005509">
    <property type="term" value="F:calcium ion binding"/>
    <property type="evidence" value="ECO:0007669"/>
    <property type="project" value="InterPro"/>
</dbReference>
<dbReference type="GO" id="GO:0005544">
    <property type="term" value="F:calcium-dependent phospholipid binding"/>
    <property type="evidence" value="ECO:0007669"/>
    <property type="project" value="UniProtKB-KW"/>
</dbReference>
<dbReference type="GO" id="GO:0001786">
    <property type="term" value="F:phosphatidylserine binding"/>
    <property type="evidence" value="ECO:0007669"/>
    <property type="project" value="TreeGrafter"/>
</dbReference>
<dbReference type="GO" id="GO:0044548">
    <property type="term" value="F:S100 protein binding"/>
    <property type="evidence" value="ECO:0000250"/>
    <property type="project" value="UniProtKB"/>
</dbReference>
<dbReference type="GO" id="GO:0032506">
    <property type="term" value="P:cytokinetic process"/>
    <property type="evidence" value="ECO:0000250"/>
    <property type="project" value="UniProtKB"/>
</dbReference>
<dbReference type="GO" id="GO:0006909">
    <property type="term" value="P:phagocytosis"/>
    <property type="evidence" value="ECO:0007669"/>
    <property type="project" value="TreeGrafter"/>
</dbReference>
<dbReference type="FunFam" id="1.10.220.10:FF:000001">
    <property type="entry name" value="Annexin"/>
    <property type="match status" value="1"/>
</dbReference>
<dbReference type="FunFam" id="1.10.220.10:FF:000002">
    <property type="entry name" value="Annexin"/>
    <property type="match status" value="1"/>
</dbReference>
<dbReference type="FunFam" id="1.10.220.10:FF:000003">
    <property type="entry name" value="Annexin"/>
    <property type="match status" value="1"/>
</dbReference>
<dbReference type="FunFam" id="1.10.220.10:FF:000004">
    <property type="entry name" value="Annexin"/>
    <property type="match status" value="1"/>
</dbReference>
<dbReference type="Gene3D" id="1.10.220.10">
    <property type="entry name" value="Annexin"/>
    <property type="match status" value="4"/>
</dbReference>
<dbReference type="InterPro" id="IPR001464">
    <property type="entry name" value="Annexin"/>
</dbReference>
<dbReference type="InterPro" id="IPR018502">
    <property type="entry name" value="Annexin_repeat"/>
</dbReference>
<dbReference type="InterPro" id="IPR018252">
    <property type="entry name" value="Annexin_repeat_CS"/>
</dbReference>
<dbReference type="InterPro" id="IPR037104">
    <property type="entry name" value="Annexin_sf"/>
</dbReference>
<dbReference type="InterPro" id="IPR008157">
    <property type="entry name" value="ANX11"/>
</dbReference>
<dbReference type="PANTHER" id="PTHR10502">
    <property type="entry name" value="ANNEXIN"/>
    <property type="match status" value="1"/>
</dbReference>
<dbReference type="PANTHER" id="PTHR10502:SF29">
    <property type="entry name" value="ANNEXIN A11"/>
    <property type="match status" value="1"/>
</dbReference>
<dbReference type="Pfam" id="PF00191">
    <property type="entry name" value="Annexin"/>
    <property type="match status" value="4"/>
</dbReference>
<dbReference type="PRINTS" id="PR00196">
    <property type="entry name" value="ANNEXIN"/>
</dbReference>
<dbReference type="PRINTS" id="PR01810">
    <property type="entry name" value="ANNEXINXI"/>
</dbReference>
<dbReference type="SMART" id="SM00335">
    <property type="entry name" value="ANX"/>
    <property type="match status" value="4"/>
</dbReference>
<dbReference type="SUPFAM" id="SSF47874">
    <property type="entry name" value="Annexin"/>
    <property type="match status" value="1"/>
</dbReference>
<dbReference type="PROSITE" id="PS00223">
    <property type="entry name" value="ANNEXIN_1"/>
    <property type="match status" value="4"/>
</dbReference>
<dbReference type="PROSITE" id="PS51897">
    <property type="entry name" value="ANNEXIN_2"/>
    <property type="match status" value="4"/>
</dbReference>
<sequence length="503" mass="54034">MSYPGYPPPPGGYPPAPGGGAWGGAGYPPPSMPPIGLDNVANYAGQFNQDYLSGMAANMSGTFGGANVPPNLYPGAPGGGYPPVPPGGFGQPPPTQPSVPPYGVYPPPGGNPPSGVPSYPPFPGAPVPGQPMPPPGHQPPGPYPGQLPVTYPGQSPVPPPGQQPMPSYPGYPGSGTVTPAVPPVQFGNRGTITDASGFDPLRDAEVLRKAMKGFGTDEQAIIDCLGSRSNKQRQQILLSFKTAYGKDLIKDLKSELSGNFEKTILALMKTPILFDAYEIKEAIKGAGTDEACLIEILASRSNEHIRELNKAYKTEFKKTLEEAIRSDTSGHFQRLLISLSQGNRDESTNVDMSLVQRDVQELYAAGENRLGTDESKFNAVLCSRSRAHLVAVFNEYQRMTGRDIEKSICREMSGDLEQGMLAVVKCLKNTPAFFAERLNRAMRGAGTKDRTLIRIMVSRSEIDLLDIRAEYKRMYGKSLYHDISGDTSGDYRKILLKICGGND</sequence>
<evidence type="ECO:0000250" key="1"/>
<evidence type="ECO:0000250" key="2">
    <source>
        <dbReference type="UniProtKB" id="P50995"/>
    </source>
</evidence>
<evidence type="ECO:0000255" key="3">
    <source>
        <dbReference type="PROSITE-ProRule" id="PRU01245"/>
    </source>
</evidence>
<evidence type="ECO:0000256" key="4">
    <source>
        <dbReference type="SAM" id="MobiDB-lite"/>
    </source>
</evidence>
<evidence type="ECO:0000269" key="5">
    <source>
    </source>
</evidence>
<evidence type="ECO:0000305" key="6"/>
<proteinExistence type="evidence at protein level"/>
<organism>
    <name type="scientific">Oryctolagus cuniculus</name>
    <name type="common">Rabbit</name>
    <dbReference type="NCBI Taxonomy" id="9986"/>
    <lineage>
        <taxon>Eukaryota</taxon>
        <taxon>Metazoa</taxon>
        <taxon>Chordata</taxon>
        <taxon>Craniata</taxon>
        <taxon>Vertebrata</taxon>
        <taxon>Euteleostomi</taxon>
        <taxon>Mammalia</taxon>
        <taxon>Eutheria</taxon>
        <taxon>Euarchontoglires</taxon>
        <taxon>Glires</taxon>
        <taxon>Lagomorpha</taxon>
        <taxon>Leporidae</taxon>
        <taxon>Oryctolagus</taxon>
    </lineage>
</organism>
<gene>
    <name type="primary">ANXA11</name>
    <name type="synonym">ANX11</name>
</gene>
<name>ANX11_RABIT</name>
<comment type="function">
    <text evidence="1">Required for midbody formation and completion of the terminal phase of cytokinesis (By similarity). Binds specifically to calcyclin in a calcium-dependent manner.</text>
</comment>
<comment type="subunit">
    <text evidence="1 5">Interacts with PDCD6 in a calcium-dependent manner (By similarity). Interacts with KIF23 during cytokinesis (By similarity). Interacts with S100A6.</text>
</comment>
<comment type="subcellular location">
    <subcellularLocation>
        <location evidence="1">Cytoplasm</location>
    </subcellularLocation>
    <subcellularLocation>
        <location evidence="1">Melanosome</location>
    </subcellularLocation>
    <subcellularLocation>
        <location evidence="1">Nucleus envelope</location>
    </subcellularLocation>
    <subcellularLocation>
        <location evidence="1">Nucleus</location>
        <location evidence="1">Nucleoplasm</location>
    </subcellularLocation>
    <subcellularLocation>
        <location evidence="1">Cytoplasm</location>
        <location evidence="1">Cytoskeleton</location>
        <location evidence="1">Spindle</location>
    </subcellularLocation>
    <text evidence="1">Found throughout the nucleoplasm at interphase and during mitosis concentrates around the mitotic apparatus. Elevation of intracellular calcium causes relocalization from the nucleoplasm to the nuclear envelope, with little effect on the cytoplasmic pool. Localization to the nuclear envelope is cell-cycle dependent.</text>
</comment>
<comment type="domain">
    <text>A pair of annexin repeats may form one binding site for calcium and phospholipid.</text>
</comment>
<comment type="similarity">
    <text evidence="3 6">Belongs to the annexin family.</text>
</comment>
<feature type="chain" id="PRO_0000067512" description="Annexin A11">
    <location>
        <begin position="1"/>
        <end position="503"/>
    </location>
</feature>
<feature type="repeat" description="Annexin 1" evidence="3">
    <location>
        <begin position="198"/>
        <end position="269"/>
    </location>
</feature>
<feature type="repeat" description="Annexin 2" evidence="3">
    <location>
        <begin position="270"/>
        <end position="341"/>
    </location>
</feature>
<feature type="repeat" description="Annexin 3" evidence="3">
    <location>
        <begin position="353"/>
        <end position="425"/>
    </location>
</feature>
<feature type="repeat" description="Annexin 4" evidence="3">
    <location>
        <begin position="429"/>
        <end position="500"/>
    </location>
</feature>
<feature type="region of interest" description="Disordered" evidence="4">
    <location>
        <begin position="1"/>
        <end position="35"/>
    </location>
</feature>
<feature type="region of interest" description="Disordered" evidence="4">
    <location>
        <begin position="56"/>
        <end position="178"/>
    </location>
</feature>
<feature type="compositionally biased region" description="Pro residues" evidence="4">
    <location>
        <begin position="1"/>
        <end position="17"/>
    </location>
</feature>
<feature type="compositionally biased region" description="Pro residues" evidence="4">
    <location>
        <begin position="80"/>
        <end position="145"/>
    </location>
</feature>
<feature type="compositionally biased region" description="Pro residues" evidence="4">
    <location>
        <begin position="155"/>
        <end position="169"/>
    </location>
</feature>
<feature type="modified residue" description="N6-acetyllysine" evidence="2">
    <location>
        <position position="246"/>
    </location>
</feature>
<feature type="modified residue" description="N6-acetyllysine" evidence="2">
    <location>
        <position position="253"/>
    </location>
</feature>
<feature type="modified residue" description="N6-acetyllysine" evidence="2">
    <location>
        <position position="477"/>
    </location>
</feature>
<accession>P33477</accession>
<protein>
    <recommendedName>
        <fullName>Annexin A11</fullName>
    </recommendedName>
    <alternativeName>
        <fullName>Annexin XI</fullName>
    </alternativeName>
    <alternativeName>
        <fullName>Annexin-11</fullName>
    </alternativeName>
    <alternativeName>
        <fullName>Calcyclin-associated annexin 50</fullName>
        <shortName>CAP-50</shortName>
    </alternativeName>
</protein>
<keyword id="KW-0007">Acetylation</keyword>
<keyword id="KW-0041">Annexin</keyword>
<keyword id="KW-0106">Calcium</keyword>
<keyword id="KW-0111">Calcium/phospholipid-binding</keyword>
<keyword id="KW-0131">Cell cycle</keyword>
<keyword id="KW-0132">Cell division</keyword>
<keyword id="KW-0963">Cytoplasm</keyword>
<keyword id="KW-0206">Cytoskeleton</keyword>
<keyword id="KW-0903">Direct protein sequencing</keyword>
<keyword id="KW-0539">Nucleus</keyword>
<keyword id="KW-1185">Reference proteome</keyword>
<keyword id="KW-0677">Repeat</keyword>
<reference key="1">
    <citation type="journal article" date="1992" name="Biochem. Biophys. Res. Commun.">
        <title>Molecular cloning of rabbit CAP-50, a calcyclin-associated annexin protein.</title>
        <authorList>
            <person name="Tokumitsu H."/>
            <person name="Mizutani A."/>
            <person name="Muramatsu M.-A."/>
            <person name="Yokota T."/>
            <person name="Arai K."/>
            <person name="Hidaka H."/>
        </authorList>
    </citation>
    <scope>NUCLEOTIDE SEQUENCE [MRNA]</scope>
    <scope>PARTIAL PROTEIN SEQUENCE</scope>
    <source>
        <tissue>Lung</tissue>
    </source>
</reference>
<reference key="2">
    <citation type="journal article" date="1992" name="J. Biol. Chem.">
        <title>A calcyclin-associated protein is a newly identified member of the Ca2+/phospholipid-binding proteins, annexin family.</title>
        <authorList>
            <person name="Tokumitsu H."/>
            <person name="Mizutani A."/>
            <person name="Minami H."/>
            <person name="Kobayashi R."/>
            <person name="Hidaka H."/>
        </authorList>
    </citation>
    <scope>PARTIAL PROTEIN SEQUENCE</scope>
</reference>
<reference key="3">
    <citation type="journal article" date="1998" name="J. Biol. Chem.">
        <title>Regulation of calcyclin (S100A6) binding by alternative splicing in the N-terminal regulatory domain of annexin XI isoforms.</title>
        <authorList>
            <person name="Sudo T."/>
            <person name="Hidaka H."/>
        </authorList>
    </citation>
    <scope>INTERACTION WITH S100A6</scope>
</reference>